<feature type="chain" id="PRO_0000223448" description="Urease accessory protein UreE">
    <location>
        <begin position="1"/>
        <end position="150"/>
    </location>
</feature>
<dbReference type="EMBL" id="DQ171937">
    <property type="protein sequence ID" value="AAZ99165.1"/>
    <property type="molecule type" value="Genomic_DNA"/>
</dbReference>
<dbReference type="RefSeq" id="WP_003092266.1">
    <property type="nucleotide sequence ID" value="NZ_CAJLUV010000001.1"/>
</dbReference>
<dbReference type="SMR" id="Q3S3T7"/>
<dbReference type="GeneID" id="61564321"/>
<dbReference type="GO" id="GO:0005737">
    <property type="term" value="C:cytoplasm"/>
    <property type="evidence" value="ECO:0007669"/>
    <property type="project" value="UniProtKB-SubCell"/>
</dbReference>
<dbReference type="GO" id="GO:0016151">
    <property type="term" value="F:nickel cation binding"/>
    <property type="evidence" value="ECO:0007669"/>
    <property type="project" value="UniProtKB-UniRule"/>
</dbReference>
<dbReference type="GO" id="GO:0051082">
    <property type="term" value="F:unfolded protein binding"/>
    <property type="evidence" value="ECO:0007669"/>
    <property type="project" value="UniProtKB-UniRule"/>
</dbReference>
<dbReference type="GO" id="GO:0006457">
    <property type="term" value="P:protein folding"/>
    <property type="evidence" value="ECO:0007669"/>
    <property type="project" value="InterPro"/>
</dbReference>
<dbReference type="GO" id="GO:0065003">
    <property type="term" value="P:protein-containing complex assembly"/>
    <property type="evidence" value="ECO:0007669"/>
    <property type="project" value="InterPro"/>
</dbReference>
<dbReference type="GO" id="GO:0019627">
    <property type="term" value="P:urea metabolic process"/>
    <property type="evidence" value="ECO:0007669"/>
    <property type="project" value="InterPro"/>
</dbReference>
<dbReference type="CDD" id="cd00571">
    <property type="entry name" value="UreE"/>
    <property type="match status" value="1"/>
</dbReference>
<dbReference type="Gene3D" id="2.60.260.20">
    <property type="entry name" value="Urease metallochaperone UreE, N-terminal domain"/>
    <property type="match status" value="1"/>
</dbReference>
<dbReference type="Gene3D" id="3.30.70.790">
    <property type="entry name" value="UreE, C-terminal domain"/>
    <property type="match status" value="1"/>
</dbReference>
<dbReference type="HAMAP" id="MF_00822">
    <property type="entry name" value="UreE"/>
    <property type="match status" value="1"/>
</dbReference>
<dbReference type="InterPro" id="IPR012406">
    <property type="entry name" value="UreE"/>
</dbReference>
<dbReference type="InterPro" id="IPR007864">
    <property type="entry name" value="UreE_C_dom"/>
</dbReference>
<dbReference type="InterPro" id="IPR004029">
    <property type="entry name" value="UreE_N"/>
</dbReference>
<dbReference type="InterPro" id="IPR036118">
    <property type="entry name" value="UreE_N_sf"/>
</dbReference>
<dbReference type="NCBIfam" id="NF009759">
    <property type="entry name" value="PRK13261.2-5"/>
    <property type="match status" value="1"/>
</dbReference>
<dbReference type="Pfam" id="PF05194">
    <property type="entry name" value="UreE_C"/>
    <property type="match status" value="1"/>
</dbReference>
<dbReference type="Pfam" id="PF02814">
    <property type="entry name" value="UreE_N"/>
    <property type="match status" value="1"/>
</dbReference>
<dbReference type="PIRSF" id="PIRSF036402">
    <property type="entry name" value="Ureas_acces_UreE"/>
    <property type="match status" value="1"/>
</dbReference>
<dbReference type="SMART" id="SM00988">
    <property type="entry name" value="UreE_N"/>
    <property type="match status" value="1"/>
</dbReference>
<dbReference type="SUPFAM" id="SSF69737">
    <property type="entry name" value="Urease metallochaperone UreE, C-terminal domain"/>
    <property type="match status" value="1"/>
</dbReference>
<dbReference type="SUPFAM" id="SSF69287">
    <property type="entry name" value="Urease metallochaperone UreE, N-terminal domain"/>
    <property type="match status" value="1"/>
</dbReference>
<protein>
    <recommendedName>
        <fullName evidence="1">Urease accessory protein UreE</fullName>
    </recommendedName>
</protein>
<accession>Q3S3T7</accession>
<name>UREE_STRVE</name>
<reference key="1">
    <citation type="submission" date="2005-08" db="EMBL/GenBank/DDBJ databases">
        <title>Cloning, sequencing and characterization of the urease gene cluster of the Streptococcus vestibularis ATCC 49124.</title>
        <authorList>
            <person name="Kim G.Y."/>
            <person name="Lee M.H."/>
        </authorList>
    </citation>
    <scope>NUCLEOTIDE SEQUENCE [GENOMIC DNA]</scope>
    <source>
        <strain>ATCC 49124 / CIP 103363 / DSM 5636 / LMG 13516 / NCTC 12166</strain>
    </source>
</reference>
<sequence>MIFTKVDALVKDIDVDKYHIETVILSSDDLNKKIIRVKSDHGNEFGIRLDKGQKLQNGSAFFIDDHHVLVIGVESQDLIVISPKDMDEMGITAHILGNTHKPIEVKDAKIYLEVDPVVEQVLTQKEIAYTIEEVVLDKPLRHVNLTAHEH</sequence>
<keyword id="KW-0143">Chaperone</keyword>
<keyword id="KW-0963">Cytoplasm</keyword>
<keyword id="KW-0533">Nickel</keyword>
<keyword id="KW-0996">Nickel insertion</keyword>
<proteinExistence type="inferred from homology"/>
<organism>
    <name type="scientific">Streptococcus vestibularis</name>
    <dbReference type="NCBI Taxonomy" id="1343"/>
    <lineage>
        <taxon>Bacteria</taxon>
        <taxon>Bacillati</taxon>
        <taxon>Bacillota</taxon>
        <taxon>Bacilli</taxon>
        <taxon>Lactobacillales</taxon>
        <taxon>Streptococcaceae</taxon>
        <taxon>Streptococcus</taxon>
    </lineage>
</organism>
<evidence type="ECO:0000255" key="1">
    <source>
        <dbReference type="HAMAP-Rule" id="MF_00822"/>
    </source>
</evidence>
<comment type="function">
    <text evidence="1">Involved in urease metallocenter assembly. Binds nickel. Probably functions as a nickel donor during metallocenter assembly.</text>
</comment>
<comment type="subcellular location">
    <subcellularLocation>
        <location evidence="1">Cytoplasm</location>
    </subcellularLocation>
</comment>
<comment type="similarity">
    <text evidence="1">Belongs to the UreE family.</text>
</comment>
<gene>
    <name evidence="1" type="primary">ureE</name>
</gene>